<name>DCUA_ECO57</name>
<organism>
    <name type="scientific">Escherichia coli O157:H7</name>
    <dbReference type="NCBI Taxonomy" id="83334"/>
    <lineage>
        <taxon>Bacteria</taxon>
        <taxon>Pseudomonadati</taxon>
        <taxon>Pseudomonadota</taxon>
        <taxon>Gammaproteobacteria</taxon>
        <taxon>Enterobacterales</taxon>
        <taxon>Enterobacteriaceae</taxon>
        <taxon>Escherichia</taxon>
    </lineage>
</organism>
<dbReference type="EMBL" id="AE005174">
    <property type="protein sequence ID" value="AAG59337.1"/>
    <property type="molecule type" value="Genomic_DNA"/>
</dbReference>
<dbReference type="EMBL" id="BA000007">
    <property type="protein sequence ID" value="BAB38542.1"/>
    <property type="molecule type" value="Genomic_DNA"/>
</dbReference>
<dbReference type="PIR" id="E86109">
    <property type="entry name" value="E86109"/>
</dbReference>
<dbReference type="PIR" id="G91268">
    <property type="entry name" value="G91268"/>
</dbReference>
<dbReference type="RefSeq" id="NP_313146.1">
    <property type="nucleotide sequence ID" value="NC_002695.1"/>
</dbReference>
<dbReference type="RefSeq" id="WP_000961959.1">
    <property type="nucleotide sequence ID" value="NZ_VOAI01000008.1"/>
</dbReference>
<dbReference type="SMR" id="P0ABN7"/>
<dbReference type="STRING" id="155864.Z5743"/>
<dbReference type="GeneID" id="914130"/>
<dbReference type="GeneID" id="93777686"/>
<dbReference type="KEGG" id="ece:Z5743"/>
<dbReference type="KEGG" id="ecs:ECs_5119"/>
<dbReference type="PATRIC" id="fig|386585.9.peg.5350"/>
<dbReference type="eggNOG" id="COG2704">
    <property type="taxonomic scope" value="Bacteria"/>
</dbReference>
<dbReference type="HOGENOM" id="CLU_036056_1_1_6"/>
<dbReference type="OMA" id="FDHAFLI"/>
<dbReference type="Proteomes" id="UP000000558">
    <property type="component" value="Chromosome"/>
</dbReference>
<dbReference type="Proteomes" id="UP000002519">
    <property type="component" value="Chromosome"/>
</dbReference>
<dbReference type="GO" id="GO:0005886">
    <property type="term" value="C:plasma membrane"/>
    <property type="evidence" value="ECO:0007669"/>
    <property type="project" value="UniProtKB-SubCell"/>
</dbReference>
<dbReference type="GO" id="GO:0015297">
    <property type="term" value="F:antiporter activity"/>
    <property type="evidence" value="ECO:0007669"/>
    <property type="project" value="UniProtKB-KW"/>
</dbReference>
<dbReference type="GO" id="GO:0015556">
    <property type="term" value="F:C4-dicarboxylate transmembrane transporter activity"/>
    <property type="evidence" value="ECO:0007669"/>
    <property type="project" value="InterPro"/>
</dbReference>
<dbReference type="InterPro" id="IPR004668">
    <property type="entry name" value="Anaer_Dcu_memb_transpt"/>
</dbReference>
<dbReference type="NCBIfam" id="TIGR00770">
    <property type="entry name" value="Dcu"/>
    <property type="match status" value="1"/>
</dbReference>
<dbReference type="NCBIfam" id="NF006927">
    <property type="entry name" value="PRK09412.1"/>
    <property type="match status" value="1"/>
</dbReference>
<dbReference type="NCBIfam" id="NF009136">
    <property type="entry name" value="PRK12489.1"/>
    <property type="match status" value="1"/>
</dbReference>
<dbReference type="PANTHER" id="PTHR36106">
    <property type="entry name" value="ANAEROBIC C4-DICARBOXYLATE TRANSPORTER DCUB"/>
    <property type="match status" value="1"/>
</dbReference>
<dbReference type="PANTHER" id="PTHR36106:SF2">
    <property type="entry name" value="C4-DICARBOXYLATE TRANSPORTER DCUA"/>
    <property type="match status" value="1"/>
</dbReference>
<dbReference type="Pfam" id="PF03605">
    <property type="entry name" value="DcuA_DcuB"/>
    <property type="match status" value="1"/>
</dbReference>
<dbReference type="PIRSF" id="PIRSF004539">
    <property type="entry name" value="C4-dicrbxl_trns"/>
    <property type="match status" value="1"/>
</dbReference>
<comment type="function">
    <text evidence="1">Responsible for the transport of C4-dicarboxylates during aerobic and anaerobic growth. Required for the uptake of L-aspartate as a nitrogen source during aerobic growth. The uptake of L-aspartate in aerobic conditions is coupled to the excretion of fumarate, resulting in the net uptake of nitrogen without carbon uptake. In addition, during anaerobic growth, catalyzes the uptake of fumarate, malate or aspartate coupled to the export of succinate. May play a a general role in anaerobic C4-dicarboxylate transport.</text>
</comment>
<comment type="catalytic activity">
    <reaction evidence="1">
        <text>fumarate(in) + L-aspartate(out) = fumarate(out) + L-aspartate(in)</text>
        <dbReference type="Rhea" id="RHEA:72459"/>
        <dbReference type="ChEBI" id="CHEBI:29806"/>
        <dbReference type="ChEBI" id="CHEBI:29991"/>
    </reaction>
    <physiologicalReaction direction="left-to-right" evidence="1">
        <dbReference type="Rhea" id="RHEA:72460"/>
    </physiologicalReaction>
</comment>
<comment type="catalytic activity">
    <reaction evidence="1">
        <text>fumarate(in) + succinate(out) = fumarate(out) + succinate(in)</text>
        <dbReference type="Rhea" id="RHEA:29323"/>
        <dbReference type="ChEBI" id="CHEBI:29806"/>
        <dbReference type="ChEBI" id="CHEBI:30031"/>
    </reaction>
    <physiologicalReaction direction="right-to-left" evidence="1">
        <dbReference type="Rhea" id="RHEA:29325"/>
    </physiologicalReaction>
</comment>
<comment type="catalytic activity">
    <reaction evidence="1">
        <text>(S)-malate(in) + succinate(out) = (S)-malate(out) + succinate(in)</text>
        <dbReference type="Rhea" id="RHEA:29327"/>
        <dbReference type="ChEBI" id="CHEBI:15589"/>
        <dbReference type="ChEBI" id="CHEBI:30031"/>
    </reaction>
    <physiologicalReaction direction="right-to-left" evidence="1">
        <dbReference type="Rhea" id="RHEA:29329"/>
    </physiologicalReaction>
</comment>
<comment type="catalytic activity">
    <reaction evidence="1">
        <text>L-aspartate(in) + succinate(out) = L-aspartate(out) + succinate(in)</text>
        <dbReference type="Rhea" id="RHEA:29343"/>
        <dbReference type="ChEBI" id="CHEBI:29991"/>
        <dbReference type="ChEBI" id="CHEBI:30031"/>
    </reaction>
    <physiologicalReaction direction="right-to-left" evidence="1">
        <dbReference type="Rhea" id="RHEA:29345"/>
    </physiologicalReaction>
</comment>
<comment type="subcellular location">
    <subcellularLocation>
        <location evidence="1">Cell inner membrane</location>
        <topology evidence="1">Multi-pass membrane protein</topology>
    </subcellularLocation>
</comment>
<comment type="similarity">
    <text evidence="2">Belongs to the DcuA/DcuB transporter (TC 2.A.13.1) family.</text>
</comment>
<gene>
    <name type="primary">dcuA</name>
    <name type="ordered locus">Z5743</name>
    <name type="ordered locus">ECs5119</name>
</gene>
<feature type="chain" id="PRO_0000170348" description="C4-dicarboxylate transporter DcuA">
    <location>
        <begin position="1"/>
        <end position="433"/>
    </location>
</feature>
<feature type="transmembrane region" description="Helical" evidence="1">
    <location>
        <begin position="1"/>
        <end position="18"/>
    </location>
</feature>
<feature type="topological domain" description="Cytoplasmic" evidence="1">
    <location>
        <position position="19"/>
    </location>
</feature>
<feature type="transmembrane region" description="Helical" evidence="1">
    <location>
        <begin position="20"/>
        <end position="37"/>
    </location>
</feature>
<feature type="topological domain" description="Periplasmic" evidence="1">
    <location>
        <begin position="38"/>
        <end position="53"/>
    </location>
</feature>
<feature type="transmembrane region" description="Helical" evidence="1">
    <location>
        <begin position="54"/>
        <end position="71"/>
    </location>
</feature>
<feature type="topological domain" description="Cytoplasmic" evidence="1">
    <location>
        <begin position="72"/>
        <end position="85"/>
    </location>
</feature>
<feature type="transmembrane region" description="Helical" evidence="1">
    <location>
        <begin position="86"/>
        <end position="103"/>
    </location>
</feature>
<feature type="topological domain" description="Periplasmic" evidence="1">
    <location>
        <begin position="104"/>
        <end position="132"/>
    </location>
</feature>
<feature type="transmembrane region" description="Helical" evidence="1">
    <location>
        <begin position="133"/>
        <end position="147"/>
    </location>
</feature>
<feature type="topological domain" description="Cytoplasmic" evidence="1">
    <location>
        <begin position="148"/>
        <end position="228"/>
    </location>
</feature>
<feature type="transmembrane region" description="Helical" evidence="1">
    <location>
        <begin position="229"/>
        <end position="246"/>
    </location>
</feature>
<feature type="topological domain" description="Periplasmic" evidence="1">
    <location>
        <begin position="247"/>
        <end position="264"/>
    </location>
</feature>
<feature type="transmembrane region" description="Helical" evidence="1">
    <location>
        <begin position="265"/>
        <end position="282"/>
    </location>
</feature>
<feature type="topological domain" description="Cytoplasmic" evidence="1">
    <location>
        <begin position="283"/>
        <end position="292"/>
    </location>
</feature>
<feature type="transmembrane region" description="Helical" evidence="1">
    <location>
        <begin position="293"/>
        <end position="310"/>
    </location>
</feature>
<feature type="topological domain" description="Periplasmic" evidence="1">
    <location>
        <begin position="311"/>
        <end position="332"/>
    </location>
</feature>
<feature type="transmembrane region" description="Helical" evidence="1">
    <location>
        <begin position="333"/>
        <end position="350"/>
    </location>
</feature>
<feature type="topological domain" description="Cytoplasmic" evidence="1">
    <location>
        <begin position="351"/>
        <end position="355"/>
    </location>
</feature>
<feature type="transmembrane region" description="Helical" evidence="1">
    <location>
        <begin position="356"/>
        <end position="373"/>
    </location>
</feature>
<feature type="topological domain" description="Periplasmic" evidence="1">
    <location>
        <begin position="374"/>
        <end position="433"/>
    </location>
</feature>
<evidence type="ECO:0000250" key="1">
    <source>
        <dbReference type="UniProtKB" id="P0ABN5"/>
    </source>
</evidence>
<evidence type="ECO:0000305" key="2"/>
<accession>P0ABN7</accession>
<accession>P04539</accession>
<protein>
    <recommendedName>
        <fullName evidence="1">C4-dicarboxylate transporter DcuA</fullName>
    </recommendedName>
</protein>
<proteinExistence type="inferred from homology"/>
<sequence length="433" mass="45751">MLVVELIIVLLAIFLGARLGGIGIGFAGGLGVLVLAAIGVKPGNIPFDVISIIMAVIAAISAMQVAGGLDYLVHQTEKLLRRNPKYITILAPIVTYFLTIFAGTGNISLATLPVIAEVAKEQGVKPCRPLSTAVVSAQIAITASPISAAVVYMSSVMEGHGISYLHLLSVVIPSTLLAVLVMSFLVTMLFNSKLSDDPIYRKRLEEGLVELRGEKQIEIKSGAKTSVWLFLLGVVGVVIYAIINSPSMGLVEKPLMNTTNAILIIMLSVATLTTVICKVDTDNILNSSTFKAGMSACICILGVAWLGDTFVSNNIDWIKDTAGEVIQGHPWLLAVIFFFASALLYSQAATAKALMPMALALNVSPLTAVASFAAVSGLFILPTYPTLVAAVQMDDTGTTRIGKFVFNHPFFIPGTLGVALAVCFGFVLGSFML</sequence>
<keyword id="KW-0050">Antiport</keyword>
<keyword id="KW-0997">Cell inner membrane</keyword>
<keyword id="KW-1003">Cell membrane</keyword>
<keyword id="KW-0472">Membrane</keyword>
<keyword id="KW-1185">Reference proteome</keyword>
<keyword id="KW-0812">Transmembrane</keyword>
<keyword id="KW-1133">Transmembrane helix</keyword>
<keyword id="KW-0813">Transport</keyword>
<reference key="1">
    <citation type="journal article" date="2001" name="Nature">
        <title>Genome sequence of enterohaemorrhagic Escherichia coli O157:H7.</title>
        <authorList>
            <person name="Perna N.T."/>
            <person name="Plunkett G. III"/>
            <person name="Burland V."/>
            <person name="Mau B."/>
            <person name="Glasner J.D."/>
            <person name="Rose D.J."/>
            <person name="Mayhew G.F."/>
            <person name="Evans P.S."/>
            <person name="Gregor J."/>
            <person name="Kirkpatrick H.A."/>
            <person name="Posfai G."/>
            <person name="Hackett J."/>
            <person name="Klink S."/>
            <person name="Boutin A."/>
            <person name="Shao Y."/>
            <person name="Miller L."/>
            <person name="Grotbeck E.J."/>
            <person name="Davis N.W."/>
            <person name="Lim A."/>
            <person name="Dimalanta E.T."/>
            <person name="Potamousis K."/>
            <person name="Apodaca J."/>
            <person name="Anantharaman T.S."/>
            <person name="Lin J."/>
            <person name="Yen G."/>
            <person name="Schwartz D.C."/>
            <person name="Welch R.A."/>
            <person name="Blattner F.R."/>
        </authorList>
    </citation>
    <scope>NUCLEOTIDE SEQUENCE [LARGE SCALE GENOMIC DNA]</scope>
    <source>
        <strain>O157:H7 / EDL933 / ATCC 700927 / EHEC</strain>
    </source>
</reference>
<reference key="2">
    <citation type="journal article" date="2001" name="DNA Res.">
        <title>Complete genome sequence of enterohemorrhagic Escherichia coli O157:H7 and genomic comparison with a laboratory strain K-12.</title>
        <authorList>
            <person name="Hayashi T."/>
            <person name="Makino K."/>
            <person name="Ohnishi M."/>
            <person name="Kurokawa K."/>
            <person name="Ishii K."/>
            <person name="Yokoyama K."/>
            <person name="Han C.-G."/>
            <person name="Ohtsubo E."/>
            <person name="Nakayama K."/>
            <person name="Murata T."/>
            <person name="Tanaka M."/>
            <person name="Tobe T."/>
            <person name="Iida T."/>
            <person name="Takami H."/>
            <person name="Honda T."/>
            <person name="Sasakawa C."/>
            <person name="Ogasawara N."/>
            <person name="Yasunaga T."/>
            <person name="Kuhara S."/>
            <person name="Shiba T."/>
            <person name="Hattori M."/>
            <person name="Shinagawa H."/>
        </authorList>
    </citation>
    <scope>NUCLEOTIDE SEQUENCE [LARGE SCALE GENOMIC DNA]</scope>
    <source>
        <strain>O157:H7 / Sakai / RIMD 0509952 / EHEC</strain>
    </source>
</reference>